<gene>
    <name type="primary">nadA</name>
    <name type="ordered locus">MK0073</name>
</gene>
<organism>
    <name type="scientific">Methanopyrus kandleri (strain AV19 / DSM 6324 / JCM 9639 / NBRC 100938)</name>
    <dbReference type="NCBI Taxonomy" id="190192"/>
    <lineage>
        <taxon>Archaea</taxon>
        <taxon>Methanobacteriati</taxon>
        <taxon>Methanobacteriota</taxon>
        <taxon>Methanomada group</taxon>
        <taxon>Methanopyri</taxon>
        <taxon>Methanopyrales</taxon>
        <taxon>Methanopyraceae</taxon>
        <taxon>Methanopyrus</taxon>
    </lineage>
</organism>
<reference key="1">
    <citation type="journal article" date="2002" name="Proc. Natl. Acad. Sci. U.S.A.">
        <title>The complete genome of hyperthermophile Methanopyrus kandleri AV19 and monophyly of archaeal methanogens.</title>
        <authorList>
            <person name="Slesarev A.I."/>
            <person name="Mezhevaya K.V."/>
            <person name="Makarova K.S."/>
            <person name="Polushin N.N."/>
            <person name="Shcherbinina O.V."/>
            <person name="Shakhova V.V."/>
            <person name="Belova G.I."/>
            <person name="Aravind L."/>
            <person name="Natale D.A."/>
            <person name="Rogozin I.B."/>
            <person name="Tatusov R.L."/>
            <person name="Wolf Y.I."/>
            <person name="Stetter K.O."/>
            <person name="Malykh A.G."/>
            <person name="Koonin E.V."/>
            <person name="Kozyavkin S.A."/>
        </authorList>
    </citation>
    <scope>NUCLEOTIDE SEQUENCE [LARGE SCALE GENOMIC DNA]</scope>
    <source>
        <strain>AV19 / DSM 6324 / JCM 9639 / NBRC 100938</strain>
    </source>
</reference>
<comment type="function">
    <text evidence="2">Catalyzes the condensation of iminoaspartate with dihydroxyacetone phosphate to form quinolinate.</text>
</comment>
<comment type="catalytic activity">
    <reaction evidence="2">
        <text>iminosuccinate + dihydroxyacetone phosphate = quinolinate + phosphate + 2 H2O + H(+)</text>
        <dbReference type="Rhea" id="RHEA:25888"/>
        <dbReference type="ChEBI" id="CHEBI:15377"/>
        <dbReference type="ChEBI" id="CHEBI:15378"/>
        <dbReference type="ChEBI" id="CHEBI:29959"/>
        <dbReference type="ChEBI" id="CHEBI:43474"/>
        <dbReference type="ChEBI" id="CHEBI:57642"/>
        <dbReference type="ChEBI" id="CHEBI:77875"/>
        <dbReference type="EC" id="2.5.1.72"/>
    </reaction>
    <physiologicalReaction direction="left-to-right" evidence="2">
        <dbReference type="Rhea" id="RHEA:25889"/>
    </physiologicalReaction>
</comment>
<comment type="cofactor">
    <cofactor evidence="2">
        <name>[4Fe-4S] cluster</name>
        <dbReference type="ChEBI" id="CHEBI:49883"/>
    </cofactor>
    <text evidence="2">Binds 1 [4Fe-4S] cluster per subunit.</text>
</comment>
<comment type="pathway">
    <text evidence="2">Cofactor biosynthesis; NAD(+) biosynthesis; quinolinate from iminoaspartate: step 1/1.</text>
</comment>
<comment type="subcellular location">
    <subcellularLocation>
        <location evidence="1">Cytoplasm</location>
    </subcellularLocation>
</comment>
<comment type="similarity">
    <text evidence="3">Belongs to the quinolinate synthase family. Type 2 subfamily.</text>
</comment>
<proteinExistence type="inferred from homology"/>
<dbReference type="EC" id="2.5.1.72" evidence="2"/>
<dbReference type="EMBL" id="AE009439">
    <property type="protein sequence ID" value="AAM01290.1"/>
    <property type="molecule type" value="Genomic_DNA"/>
</dbReference>
<dbReference type="RefSeq" id="WP_011018445.1">
    <property type="nucleotide sequence ID" value="NC_003551.1"/>
</dbReference>
<dbReference type="SMR" id="Q8TZ66"/>
<dbReference type="FunCoup" id="Q8TZ66">
    <property type="interactions" value="85"/>
</dbReference>
<dbReference type="STRING" id="190192.MK0073"/>
<dbReference type="PaxDb" id="190192-MK0073"/>
<dbReference type="EnsemblBacteria" id="AAM01290">
    <property type="protein sequence ID" value="AAM01290"/>
    <property type="gene ID" value="MK0073"/>
</dbReference>
<dbReference type="GeneID" id="1477376"/>
<dbReference type="KEGG" id="mka:MK0073"/>
<dbReference type="PATRIC" id="fig|190192.8.peg.74"/>
<dbReference type="HOGENOM" id="CLU_047382_0_0_2"/>
<dbReference type="InParanoid" id="Q8TZ66"/>
<dbReference type="OrthoDB" id="5931at2157"/>
<dbReference type="UniPathway" id="UPA00253">
    <property type="reaction ID" value="UER00327"/>
</dbReference>
<dbReference type="Proteomes" id="UP000001826">
    <property type="component" value="Chromosome"/>
</dbReference>
<dbReference type="GO" id="GO:0005829">
    <property type="term" value="C:cytosol"/>
    <property type="evidence" value="ECO:0007669"/>
    <property type="project" value="TreeGrafter"/>
</dbReference>
<dbReference type="GO" id="GO:0051539">
    <property type="term" value="F:4 iron, 4 sulfur cluster binding"/>
    <property type="evidence" value="ECO:0007669"/>
    <property type="project" value="UniProtKB-KW"/>
</dbReference>
<dbReference type="GO" id="GO:0046872">
    <property type="term" value="F:metal ion binding"/>
    <property type="evidence" value="ECO:0007669"/>
    <property type="project" value="UniProtKB-KW"/>
</dbReference>
<dbReference type="GO" id="GO:0008987">
    <property type="term" value="F:quinolinate synthetase A activity"/>
    <property type="evidence" value="ECO:0007669"/>
    <property type="project" value="InterPro"/>
</dbReference>
<dbReference type="GO" id="GO:0034628">
    <property type="term" value="P:'de novo' NAD biosynthetic process from L-aspartate"/>
    <property type="evidence" value="ECO:0007669"/>
    <property type="project" value="TreeGrafter"/>
</dbReference>
<dbReference type="Gene3D" id="3.40.50.10800">
    <property type="entry name" value="NadA-like"/>
    <property type="match status" value="3"/>
</dbReference>
<dbReference type="InterPro" id="IPR003473">
    <property type="entry name" value="NadA"/>
</dbReference>
<dbReference type="InterPro" id="IPR036094">
    <property type="entry name" value="NadA_sf"/>
</dbReference>
<dbReference type="NCBIfam" id="TIGR00550">
    <property type="entry name" value="nadA"/>
    <property type="match status" value="1"/>
</dbReference>
<dbReference type="NCBIfam" id="NF006878">
    <property type="entry name" value="PRK09375.1-2"/>
    <property type="match status" value="1"/>
</dbReference>
<dbReference type="PANTHER" id="PTHR30573:SF0">
    <property type="entry name" value="QUINOLINATE SYNTHASE, CHLOROPLASTIC"/>
    <property type="match status" value="1"/>
</dbReference>
<dbReference type="PANTHER" id="PTHR30573">
    <property type="entry name" value="QUINOLINATE SYNTHETASE A"/>
    <property type="match status" value="1"/>
</dbReference>
<dbReference type="Pfam" id="PF02445">
    <property type="entry name" value="NadA"/>
    <property type="match status" value="1"/>
</dbReference>
<dbReference type="SUPFAM" id="SSF142754">
    <property type="entry name" value="NadA-like"/>
    <property type="match status" value="1"/>
</dbReference>
<keyword id="KW-0004">4Fe-4S</keyword>
<keyword id="KW-0963">Cytoplasm</keyword>
<keyword id="KW-0408">Iron</keyword>
<keyword id="KW-0411">Iron-sulfur</keyword>
<keyword id="KW-0479">Metal-binding</keyword>
<keyword id="KW-0662">Pyridine nucleotide biosynthesis</keyword>
<keyword id="KW-1185">Reference proteome</keyword>
<keyword id="KW-0808">Transferase</keyword>
<name>NADA_METKA</name>
<evidence type="ECO:0000250" key="1"/>
<evidence type="ECO:0000250" key="2">
    <source>
        <dbReference type="UniProtKB" id="O57767"/>
    </source>
</evidence>
<evidence type="ECO:0000305" key="3"/>
<feature type="chain" id="PRO_0000155804" description="Quinolinate synthase">
    <location>
        <begin position="1"/>
        <end position="292"/>
    </location>
</feature>
<feature type="binding site" evidence="2">
    <location>
        <position position="8"/>
    </location>
    <ligand>
        <name>iminosuccinate</name>
        <dbReference type="ChEBI" id="CHEBI:77875"/>
    </ligand>
</feature>
<feature type="binding site" evidence="2">
    <location>
        <position position="25"/>
    </location>
    <ligand>
        <name>iminosuccinate</name>
        <dbReference type="ChEBI" id="CHEBI:77875"/>
    </ligand>
</feature>
<feature type="binding site" evidence="2">
    <location>
        <position position="70"/>
    </location>
    <ligand>
        <name>[4Fe-4S] cluster</name>
        <dbReference type="ChEBI" id="CHEBI:49883"/>
    </ligand>
</feature>
<feature type="binding site" evidence="2">
    <location>
        <begin position="96"/>
        <end position="98"/>
    </location>
    <ligand>
        <name>iminosuccinate</name>
        <dbReference type="ChEBI" id="CHEBI:77875"/>
    </ligand>
</feature>
<feature type="binding site" evidence="2">
    <location>
        <position position="113"/>
    </location>
    <ligand>
        <name>iminosuccinate</name>
        <dbReference type="ChEBI" id="CHEBI:77875"/>
    </ligand>
</feature>
<feature type="binding site" evidence="2">
    <location>
        <position position="158"/>
    </location>
    <ligand>
        <name>[4Fe-4S] cluster</name>
        <dbReference type="ChEBI" id="CHEBI:49883"/>
    </ligand>
</feature>
<feature type="binding site" evidence="2">
    <location>
        <begin position="184"/>
        <end position="186"/>
    </location>
    <ligand>
        <name>iminosuccinate</name>
        <dbReference type="ChEBI" id="CHEBI:77875"/>
    </ligand>
</feature>
<feature type="binding site" evidence="2">
    <location>
        <position position="201"/>
    </location>
    <ligand>
        <name>iminosuccinate</name>
        <dbReference type="ChEBI" id="CHEBI:77875"/>
    </ligand>
</feature>
<feature type="binding site" evidence="2">
    <location>
        <position position="244"/>
    </location>
    <ligand>
        <name>[4Fe-4S] cluster</name>
        <dbReference type="ChEBI" id="CHEBI:49883"/>
    </ligand>
</feature>
<sequence>METFVLAHNYQRPDVQLMADSVGDSLELALEAREIDADRIVMCGVDFMAEVVKALNPDREVVVPDHRAACGMAMRLRAKELREFRREHPDAAVVVYVNTSAEVKAEADVMCTSANAVEVVSSLPEDKIIFVPDGNLAAWVQKHVPDKEVIPFPEHGCCPVHHSLSPSDLRELCSQHPDAAVVVHPECPLEVCAMADFVGSTSQIRQYCEKEDASKIVMGTEEGLAFRIRRETGTEVIVPGHMVCPDMKINTGEKVERVLEARHVPEPLRVELDPDLISQVEEVVEEMFRLTR</sequence>
<accession>Q8TZ66</accession>
<protein>
    <recommendedName>
        <fullName evidence="2">Quinolinate synthase</fullName>
        <ecNumber evidence="2">2.5.1.72</ecNumber>
    </recommendedName>
</protein>